<name>WDR1_RAT</name>
<sequence length="606" mass="66181">MPYEIKKVFASLPQVERGVSKILGGDPKGDNFLYTNGKCVILRNIDNPAVADIYTEHAHQVVVAKYAPSGFYIASGDISGKLRIWDTTQKEHILKYEYQPFAGKIKDIAWTEDSKRIAVVGEGREKFGAVFLWDTGSSVGEITGHNKVINSVDIKQNRPYRLATGSDDNCAAFFEGPPFKFKFTIGDHSRFVNCVRFSPDGNRFATASADGQIFIYDGKTGEKVCALGGSKAHDGGIYAISWSPDSTHLLSASGDKTSKIWDVNVNSVVSTFPMGSNVLDQQLGCLWQKDHLLSISLSGYINYLDKNNPSKPLRVIKGHSKSIQCLTVHKNGGKSYIYSGSHDGHINYWDSETGENDSFSGKGHTNQVSRMTVDESGQLVSCSMDDTVRYTNLTLRDYSGQGVVKLDVQPKCVAVGPGGYTVVVCIGQIVLLKDQKKCFSIDNPGYEPEVVAVHPGGDTVAVGGSDGNVRVYSILGATLKDEGKLLEAKGPVTDLAYSHDGAFLAVCDASKVVTVFSVADGYSENNVFYGHHAKIVCLAWSPDNEHFASGGMDMMVYVWTLSDPETKVKIQDAHRLHHVSSLAWLDEHTLVTTSHDASVKEWTITY</sequence>
<gene>
    <name type="primary">Wdr1</name>
</gene>
<evidence type="ECO:0000250" key="1">
    <source>
        <dbReference type="UniProtKB" id="O75083"/>
    </source>
</evidence>
<evidence type="ECO:0000250" key="2">
    <source>
        <dbReference type="UniProtKB" id="O88342"/>
    </source>
</evidence>
<evidence type="ECO:0000269" key="3">
    <source>
    </source>
</evidence>
<evidence type="ECO:0000305" key="4"/>
<keyword id="KW-0007">Acetylation</keyword>
<keyword id="KW-0009">Actin-binding</keyword>
<keyword id="KW-0965">Cell junction</keyword>
<keyword id="KW-0966">Cell projection</keyword>
<keyword id="KW-0963">Cytoplasm</keyword>
<keyword id="KW-0206">Cytoskeleton</keyword>
<keyword id="KW-0903">Direct protein sequencing</keyword>
<keyword id="KW-0597">Phosphoprotein</keyword>
<keyword id="KW-1185">Reference proteome</keyword>
<keyword id="KW-0677">Repeat</keyword>
<keyword id="KW-0853">WD repeat</keyword>
<protein>
    <recommendedName>
        <fullName>WD repeat-containing protein 1</fullName>
    </recommendedName>
</protein>
<comment type="function">
    <text evidence="1 2">Induces disassembly of actin filaments in conjunction with ADF/cofilin family proteins. Enhances cofilin-mediated actin severing. Involved in cytokinesis. Involved in chemotactic cell migration by restricting lamellipodial membrane protrusions. Involved in myocardium sarcomere organization. Required for cardiomyocyte growth and maintenance. Involved in megakaryocyte maturation and platelet shedding. Required for the establishment of planar cell polarity (PCP) during follicular epithelium development and for cell shape changes during PCP; the function seems to implicate cooperation with CFL1 and/or DSTN/ADF. Involved in the generation/maintenance of cortical tension. Involved in assembly and maintenance of epithelial apical cell junctions and plays a role in the organization of the perijunctional actomyosin belt (By similarity).</text>
</comment>
<comment type="subcellular location">
    <subcellularLocation>
        <location evidence="3">Cytoplasm</location>
        <location evidence="3">Cytoskeleton</location>
    </subcellularLocation>
    <subcellularLocation>
        <location evidence="1">Cell projection</location>
        <location evidence="1">Podosome</location>
    </subcellularLocation>
</comment>
<comment type="similarity">
    <text evidence="4">Belongs to the WD repeat AIP1 family.</text>
</comment>
<organism>
    <name type="scientific">Rattus norvegicus</name>
    <name type="common">Rat</name>
    <dbReference type="NCBI Taxonomy" id="10116"/>
    <lineage>
        <taxon>Eukaryota</taxon>
        <taxon>Metazoa</taxon>
        <taxon>Chordata</taxon>
        <taxon>Craniata</taxon>
        <taxon>Vertebrata</taxon>
        <taxon>Euteleostomi</taxon>
        <taxon>Mammalia</taxon>
        <taxon>Eutheria</taxon>
        <taxon>Euarchontoglires</taxon>
        <taxon>Glires</taxon>
        <taxon>Rodentia</taxon>
        <taxon>Myomorpha</taxon>
        <taxon>Muroidea</taxon>
        <taxon>Muridae</taxon>
        <taxon>Murinae</taxon>
        <taxon>Rattus</taxon>
    </lineage>
</organism>
<feature type="chain" id="PRO_0000271365" description="WD repeat-containing protein 1">
    <location>
        <begin position="1"/>
        <end position="606"/>
    </location>
</feature>
<feature type="repeat" description="WD 1">
    <location>
        <begin position="4"/>
        <end position="45"/>
    </location>
</feature>
<feature type="repeat" description="WD 2">
    <location>
        <begin position="48"/>
        <end position="87"/>
    </location>
</feature>
<feature type="repeat" description="WD 3">
    <location>
        <begin position="93"/>
        <end position="135"/>
    </location>
</feature>
<feature type="repeat" description="WD 4">
    <location>
        <begin position="138"/>
        <end position="176"/>
    </location>
</feature>
<feature type="repeat" description="WD 5">
    <location>
        <begin position="180"/>
        <end position="218"/>
    </location>
</feature>
<feature type="repeat" description="WD 6">
    <location>
        <begin position="224"/>
        <end position="263"/>
    </location>
</feature>
<feature type="repeat" description="WD 7">
    <location>
        <begin position="270"/>
        <end position="306"/>
    </location>
</feature>
<feature type="repeat" description="WD 8">
    <location>
        <begin position="311"/>
        <end position="351"/>
    </location>
</feature>
<feature type="repeat" description="WD 9">
    <location>
        <begin position="358"/>
        <end position="408"/>
    </location>
</feature>
<feature type="repeat" description="WD 10">
    <location>
        <begin position="432"/>
        <end position="474"/>
    </location>
</feature>
<feature type="repeat" description="WD 11">
    <location>
        <begin position="480"/>
        <end position="518"/>
    </location>
</feature>
<feature type="repeat" description="WD 12">
    <location>
        <begin position="523"/>
        <end position="561"/>
    </location>
</feature>
<feature type="repeat" description="WD 13">
    <location>
        <begin position="566"/>
        <end position="604"/>
    </location>
</feature>
<feature type="modified residue" description="N6-acetyllysine" evidence="1">
    <location>
        <position position="28"/>
    </location>
</feature>
<feature type="modified residue" description="N6-acetyllysine" evidence="1">
    <location>
        <position position="81"/>
    </location>
</feature>
<feature type="modified residue" description="N6-acetyllysine" evidence="1">
    <location>
        <position position="95"/>
    </location>
</feature>
<feature type="modified residue" description="N6-acetyllysine" evidence="1">
    <location>
        <position position="115"/>
    </location>
</feature>
<feature type="modified residue" description="Phosphotyrosine" evidence="1">
    <location>
        <position position="238"/>
    </location>
</feature>
<feature type="modified residue" description="N6-acetyllysine" evidence="1">
    <location>
        <position position="480"/>
    </location>
</feature>
<dbReference type="EMBL" id="AY986483">
    <property type="protein sequence ID" value="AAX94056.1"/>
    <property type="molecule type" value="mRNA"/>
</dbReference>
<dbReference type="EMBL" id="BC085864">
    <property type="protein sequence ID" value="AAH85864.1"/>
    <property type="molecule type" value="mRNA"/>
</dbReference>
<dbReference type="RefSeq" id="NP_001014157.1">
    <property type="nucleotide sequence ID" value="NM_001014135.1"/>
</dbReference>
<dbReference type="SMR" id="Q5RKI0"/>
<dbReference type="BioGRID" id="262322">
    <property type="interactions" value="4"/>
</dbReference>
<dbReference type="FunCoup" id="Q5RKI0">
    <property type="interactions" value="3021"/>
</dbReference>
<dbReference type="STRING" id="10116.ENSRNOP00000024012"/>
<dbReference type="GlyGen" id="Q5RKI0">
    <property type="glycosylation" value="1 site, 1 O-linked glycan (1 site)"/>
</dbReference>
<dbReference type="iPTMnet" id="Q5RKI0"/>
<dbReference type="PhosphoSitePlus" id="Q5RKI0"/>
<dbReference type="SwissPalm" id="Q5RKI0"/>
<dbReference type="jPOST" id="Q5RKI0"/>
<dbReference type="PaxDb" id="10116-ENSRNOP00000024012"/>
<dbReference type="Ensembl" id="ENSRNOT00000024012.7">
    <property type="protein sequence ID" value="ENSRNOP00000024012.5"/>
    <property type="gene ID" value="ENSRNOG00000028498.6"/>
</dbReference>
<dbReference type="GeneID" id="360950"/>
<dbReference type="KEGG" id="rno:360950"/>
<dbReference type="AGR" id="RGD:1305789"/>
<dbReference type="CTD" id="9948"/>
<dbReference type="RGD" id="1305789">
    <property type="gene designation" value="Wdr1"/>
</dbReference>
<dbReference type="eggNOG" id="KOG0318">
    <property type="taxonomic scope" value="Eukaryota"/>
</dbReference>
<dbReference type="GeneTree" id="ENSGT00390000009416"/>
<dbReference type="HOGENOM" id="CLU_015246_3_0_1"/>
<dbReference type="InParanoid" id="Q5RKI0"/>
<dbReference type="OMA" id="FYQGPPF"/>
<dbReference type="OrthoDB" id="2306at2759"/>
<dbReference type="PhylomeDB" id="Q5RKI0"/>
<dbReference type="TreeFam" id="TF300821"/>
<dbReference type="Reactome" id="R-RNO-114608">
    <property type="pathway name" value="Platelet degranulation"/>
</dbReference>
<dbReference type="PRO" id="PR:Q5RKI0"/>
<dbReference type="Proteomes" id="UP000002494">
    <property type="component" value="Chromosome 14"/>
</dbReference>
<dbReference type="Bgee" id="ENSRNOG00000028498">
    <property type="expression patterns" value="Expressed in colon and 19 other cell types or tissues"/>
</dbReference>
<dbReference type="GO" id="GO:0015629">
    <property type="term" value="C:actin cytoskeleton"/>
    <property type="evidence" value="ECO:0000314"/>
    <property type="project" value="MGI"/>
</dbReference>
<dbReference type="GO" id="GO:0042995">
    <property type="term" value="C:cell projection"/>
    <property type="evidence" value="ECO:0007669"/>
    <property type="project" value="UniProtKB-KW"/>
</dbReference>
<dbReference type="GO" id="GO:0005911">
    <property type="term" value="C:cell-cell junction"/>
    <property type="evidence" value="ECO:0000266"/>
    <property type="project" value="RGD"/>
</dbReference>
<dbReference type="GO" id="GO:0030864">
    <property type="term" value="C:cortical actin cytoskeleton"/>
    <property type="evidence" value="ECO:0000318"/>
    <property type="project" value="GO_Central"/>
</dbReference>
<dbReference type="GO" id="GO:0005829">
    <property type="term" value="C:cytosol"/>
    <property type="evidence" value="ECO:0007669"/>
    <property type="project" value="Ensembl"/>
</dbReference>
<dbReference type="GO" id="GO:0098978">
    <property type="term" value="C:glutamatergic synapse"/>
    <property type="evidence" value="ECO:0000266"/>
    <property type="project" value="RGD"/>
</dbReference>
<dbReference type="GO" id="GO:0005886">
    <property type="term" value="C:plasma membrane"/>
    <property type="evidence" value="ECO:0007669"/>
    <property type="project" value="Ensembl"/>
</dbReference>
<dbReference type="GO" id="GO:0002102">
    <property type="term" value="C:podosome"/>
    <property type="evidence" value="ECO:0007669"/>
    <property type="project" value="UniProtKB-SubCell"/>
</dbReference>
<dbReference type="GO" id="GO:0045202">
    <property type="term" value="C:synapse"/>
    <property type="evidence" value="ECO:0000266"/>
    <property type="project" value="RGD"/>
</dbReference>
<dbReference type="GO" id="GO:0051015">
    <property type="term" value="F:actin filament binding"/>
    <property type="evidence" value="ECO:0000314"/>
    <property type="project" value="MGI"/>
</dbReference>
<dbReference type="GO" id="GO:0030036">
    <property type="term" value="P:actin cytoskeleton organization"/>
    <property type="evidence" value="ECO:0000266"/>
    <property type="project" value="RGD"/>
</dbReference>
<dbReference type="GO" id="GO:0030042">
    <property type="term" value="P:actin filament depolymerization"/>
    <property type="evidence" value="ECO:0000318"/>
    <property type="project" value="GO_Central"/>
</dbReference>
<dbReference type="GO" id="GO:0030043">
    <property type="term" value="P:actin filament fragmentation"/>
    <property type="evidence" value="ECO:0000266"/>
    <property type="project" value="RGD"/>
</dbReference>
<dbReference type="GO" id="GO:0043297">
    <property type="term" value="P:apical junction assembly"/>
    <property type="evidence" value="ECO:0000266"/>
    <property type="project" value="RGD"/>
</dbReference>
<dbReference type="GO" id="GO:0030865">
    <property type="term" value="P:cortical cytoskeleton organization"/>
    <property type="evidence" value="ECO:0000266"/>
    <property type="project" value="RGD"/>
</dbReference>
<dbReference type="GO" id="GO:0042247">
    <property type="term" value="P:establishment of planar polarity of follicular epithelium"/>
    <property type="evidence" value="ECO:0000266"/>
    <property type="project" value="RGD"/>
</dbReference>
<dbReference type="GO" id="GO:0040011">
    <property type="term" value="P:locomotion"/>
    <property type="evidence" value="ECO:0000318"/>
    <property type="project" value="GO_Central"/>
</dbReference>
<dbReference type="GO" id="GO:0045199">
    <property type="term" value="P:maintenance of epithelial cell apical/basal polarity"/>
    <property type="evidence" value="ECO:0000266"/>
    <property type="project" value="RGD"/>
</dbReference>
<dbReference type="GO" id="GO:0002446">
    <property type="term" value="P:neutrophil mediated immunity"/>
    <property type="evidence" value="ECO:0000266"/>
    <property type="project" value="RGD"/>
</dbReference>
<dbReference type="GO" id="GO:1990266">
    <property type="term" value="P:neutrophil migration"/>
    <property type="evidence" value="ECO:0000266"/>
    <property type="project" value="RGD"/>
</dbReference>
<dbReference type="GO" id="GO:0030220">
    <property type="term" value="P:platelet formation"/>
    <property type="evidence" value="ECO:0000266"/>
    <property type="project" value="RGD"/>
</dbReference>
<dbReference type="GO" id="GO:0030836">
    <property type="term" value="P:positive regulation of actin filament depolymerization"/>
    <property type="evidence" value="ECO:0000266"/>
    <property type="project" value="RGD"/>
</dbReference>
<dbReference type="GO" id="GO:0030834">
    <property type="term" value="P:regulation of actin filament depolymerization"/>
    <property type="evidence" value="ECO:0000266"/>
    <property type="project" value="RGD"/>
</dbReference>
<dbReference type="GO" id="GO:0008360">
    <property type="term" value="P:regulation of cell shape"/>
    <property type="evidence" value="ECO:0000266"/>
    <property type="project" value="RGD"/>
</dbReference>
<dbReference type="GO" id="GO:0048713">
    <property type="term" value="P:regulation of oligodendrocyte differentiation"/>
    <property type="evidence" value="ECO:0000314"/>
    <property type="project" value="MGI"/>
</dbReference>
<dbReference type="GO" id="GO:0060307">
    <property type="term" value="P:regulation of ventricular cardiac muscle cell membrane repolarization"/>
    <property type="evidence" value="ECO:0000266"/>
    <property type="project" value="RGD"/>
</dbReference>
<dbReference type="GO" id="GO:0045214">
    <property type="term" value="P:sarcomere organization"/>
    <property type="evidence" value="ECO:0000266"/>
    <property type="project" value="RGD"/>
</dbReference>
<dbReference type="CDD" id="cd00200">
    <property type="entry name" value="WD40"/>
    <property type="match status" value="1"/>
</dbReference>
<dbReference type="FunFam" id="2.130.10.10:FF:000097">
    <property type="entry name" value="WD repeat domain 1"/>
    <property type="match status" value="1"/>
</dbReference>
<dbReference type="FunFam" id="2.130.10.10:FF:000203">
    <property type="entry name" value="WD repeat domain 1"/>
    <property type="match status" value="1"/>
</dbReference>
<dbReference type="Gene3D" id="2.130.10.10">
    <property type="entry name" value="YVTN repeat-like/Quinoprotein amine dehydrogenase"/>
    <property type="match status" value="2"/>
</dbReference>
<dbReference type="InterPro" id="IPR020472">
    <property type="entry name" value="G-protein_beta_WD-40_rep"/>
</dbReference>
<dbReference type="InterPro" id="IPR011045">
    <property type="entry name" value="N2O_reductase_N"/>
</dbReference>
<dbReference type="InterPro" id="IPR015943">
    <property type="entry name" value="WD40/YVTN_repeat-like_dom_sf"/>
</dbReference>
<dbReference type="InterPro" id="IPR019775">
    <property type="entry name" value="WD40_repeat_CS"/>
</dbReference>
<dbReference type="InterPro" id="IPR036322">
    <property type="entry name" value="WD40_repeat_dom_sf"/>
</dbReference>
<dbReference type="InterPro" id="IPR001680">
    <property type="entry name" value="WD40_rpt"/>
</dbReference>
<dbReference type="PANTHER" id="PTHR19856:SF0">
    <property type="entry name" value="WD REPEAT-CONTAINING PROTEIN 1"/>
    <property type="match status" value="1"/>
</dbReference>
<dbReference type="PANTHER" id="PTHR19856">
    <property type="entry name" value="WD-REPEATCONTAINING PROTEIN WDR1"/>
    <property type="match status" value="1"/>
</dbReference>
<dbReference type="Pfam" id="PF00400">
    <property type="entry name" value="WD40"/>
    <property type="match status" value="10"/>
</dbReference>
<dbReference type="PRINTS" id="PR00320">
    <property type="entry name" value="GPROTEINBRPT"/>
</dbReference>
<dbReference type="SMART" id="SM00320">
    <property type="entry name" value="WD40"/>
    <property type="match status" value="11"/>
</dbReference>
<dbReference type="SUPFAM" id="SSF50974">
    <property type="entry name" value="Nitrous oxide reductase, N-terminal domain"/>
    <property type="match status" value="1"/>
</dbReference>
<dbReference type="SUPFAM" id="SSF50978">
    <property type="entry name" value="WD40 repeat-like"/>
    <property type="match status" value="1"/>
</dbReference>
<dbReference type="PROSITE" id="PS00678">
    <property type="entry name" value="WD_REPEATS_1"/>
    <property type="match status" value="1"/>
</dbReference>
<dbReference type="PROSITE" id="PS50082">
    <property type="entry name" value="WD_REPEATS_2"/>
    <property type="match status" value="5"/>
</dbReference>
<dbReference type="PROSITE" id="PS50294">
    <property type="entry name" value="WD_REPEATS_REGION"/>
    <property type="match status" value="1"/>
</dbReference>
<reference key="1">
    <citation type="submission" date="2005-03" db="EMBL/GenBank/DDBJ databases">
        <title>Human WDR1 interacts with actin and is involved in cell attachment and cytoskeletal rearrangement.</title>
        <authorList>
            <person name="Noone T.E."/>
            <person name="Hubberstey A.V."/>
        </authorList>
    </citation>
    <scope>NUCLEOTIDE SEQUENCE [MRNA]</scope>
</reference>
<reference key="2">
    <citation type="journal article" date="2004" name="Genome Res.">
        <title>The status, quality, and expansion of the NIH full-length cDNA project: the Mammalian Gene Collection (MGC).</title>
        <authorList>
            <consortium name="The MGC Project Team"/>
        </authorList>
    </citation>
    <scope>NUCLEOTIDE SEQUENCE [LARGE SCALE MRNA]</scope>
    <source>
        <tissue>Heart</tissue>
    </source>
</reference>
<reference key="3">
    <citation type="submission" date="2007-04" db="UniProtKB">
        <authorList>
            <person name="Lubec G."/>
            <person name="Afjehi-Sadat L."/>
            <person name="Chen W.-Q."/>
        </authorList>
    </citation>
    <scope>PROTEIN SEQUENCE OF 44-81; 127-147; 162-180; 204-219; 290-306 AND 490-534</scope>
    <scope>IDENTIFICATION BY MASS SPECTROMETRY</scope>
    <source>
        <strain>Sprague-Dawley</strain>
        <tissue>Hippocampus</tissue>
        <tissue>Spinal cord</tissue>
    </source>
</reference>
<reference key="4">
    <citation type="journal article" date="2004" name="Neurosci. Lett.">
        <title>Subcellular localization of WD40 repeat 1 protein in PC12 rat pheochromocytoma cells.</title>
        <authorList>
            <person name="Shin D.H."/>
            <person name="Lee E."/>
            <person name="Chung Y.H."/>
            <person name="Mun G.H."/>
            <person name="Park J."/>
            <person name="Lomax M.I."/>
            <person name="Oh S.H."/>
        </authorList>
    </citation>
    <scope>SUBCELLULAR LOCATION</scope>
</reference>
<proteinExistence type="evidence at protein level"/>
<accession>Q5RKI0</accession>